<name>XERS_STRP8</name>
<organism>
    <name type="scientific">Streptococcus pyogenes serotype M18 (strain MGAS8232)</name>
    <dbReference type="NCBI Taxonomy" id="186103"/>
    <lineage>
        <taxon>Bacteria</taxon>
        <taxon>Bacillati</taxon>
        <taxon>Bacillota</taxon>
        <taxon>Bacilli</taxon>
        <taxon>Lactobacillales</taxon>
        <taxon>Streptococcaceae</taxon>
        <taxon>Streptococcus</taxon>
    </lineage>
</organism>
<accession>Q8P0Y8</accession>
<evidence type="ECO:0000255" key="1">
    <source>
        <dbReference type="HAMAP-Rule" id="MF_01816"/>
    </source>
</evidence>
<evidence type="ECO:0000255" key="2">
    <source>
        <dbReference type="PROSITE-ProRule" id="PRU01246"/>
    </source>
</evidence>
<evidence type="ECO:0000255" key="3">
    <source>
        <dbReference type="PROSITE-ProRule" id="PRU01248"/>
    </source>
</evidence>
<reference key="1">
    <citation type="journal article" date="2002" name="Proc. Natl. Acad. Sci. U.S.A.">
        <title>Genome sequence and comparative microarray analysis of serotype M18 group A Streptococcus strains associated with acute rheumatic fever outbreaks.</title>
        <authorList>
            <person name="Smoot J.C."/>
            <person name="Barbian K.D."/>
            <person name="Van Gompel J.J."/>
            <person name="Smoot L.M."/>
            <person name="Chaussee M.S."/>
            <person name="Sylva G.L."/>
            <person name="Sturdevant D.E."/>
            <person name="Ricklefs S.M."/>
            <person name="Porcella S.F."/>
            <person name="Parkins L.D."/>
            <person name="Beres S.B."/>
            <person name="Campbell D.S."/>
            <person name="Smith T.M."/>
            <person name="Zhang Q."/>
            <person name="Kapur V."/>
            <person name="Daly J.A."/>
            <person name="Veasy L.G."/>
            <person name="Musser J.M."/>
        </authorList>
    </citation>
    <scope>NUCLEOTIDE SEQUENCE [LARGE SCALE GENOMIC DNA]</scope>
    <source>
        <strain>MGAS8232</strain>
    </source>
</reference>
<dbReference type="EMBL" id="AE009949">
    <property type="protein sequence ID" value="AAL97765.1"/>
    <property type="molecule type" value="Genomic_DNA"/>
</dbReference>
<dbReference type="RefSeq" id="WP_011017790.1">
    <property type="nucleotide sequence ID" value="NC_003485.1"/>
</dbReference>
<dbReference type="SMR" id="Q8P0Y8"/>
<dbReference type="KEGG" id="spm:spyM18_1147"/>
<dbReference type="HOGENOM" id="CLU_027562_9_6_9"/>
<dbReference type="GO" id="GO:0005737">
    <property type="term" value="C:cytoplasm"/>
    <property type="evidence" value="ECO:0007669"/>
    <property type="project" value="UniProtKB-SubCell"/>
</dbReference>
<dbReference type="GO" id="GO:0003677">
    <property type="term" value="F:DNA binding"/>
    <property type="evidence" value="ECO:0007669"/>
    <property type="project" value="UniProtKB-KW"/>
</dbReference>
<dbReference type="GO" id="GO:0009037">
    <property type="term" value="F:tyrosine-based site-specific recombinase activity"/>
    <property type="evidence" value="ECO:0007669"/>
    <property type="project" value="UniProtKB-UniRule"/>
</dbReference>
<dbReference type="GO" id="GO:0051301">
    <property type="term" value="P:cell division"/>
    <property type="evidence" value="ECO:0007669"/>
    <property type="project" value="UniProtKB-KW"/>
</dbReference>
<dbReference type="GO" id="GO:0007059">
    <property type="term" value="P:chromosome segregation"/>
    <property type="evidence" value="ECO:0007669"/>
    <property type="project" value="UniProtKB-UniRule"/>
</dbReference>
<dbReference type="GO" id="GO:0006310">
    <property type="term" value="P:DNA recombination"/>
    <property type="evidence" value="ECO:0007669"/>
    <property type="project" value="UniProtKB-UniRule"/>
</dbReference>
<dbReference type="CDD" id="cd00397">
    <property type="entry name" value="DNA_BRE_C"/>
    <property type="match status" value="1"/>
</dbReference>
<dbReference type="Gene3D" id="1.10.150.130">
    <property type="match status" value="1"/>
</dbReference>
<dbReference type="Gene3D" id="1.10.443.10">
    <property type="entry name" value="Intergrase catalytic core"/>
    <property type="match status" value="1"/>
</dbReference>
<dbReference type="HAMAP" id="MF_01816">
    <property type="entry name" value="Recomb_XerS"/>
    <property type="match status" value="1"/>
</dbReference>
<dbReference type="InterPro" id="IPR044068">
    <property type="entry name" value="CB"/>
</dbReference>
<dbReference type="InterPro" id="IPR011010">
    <property type="entry name" value="DNA_brk_join_enz"/>
</dbReference>
<dbReference type="InterPro" id="IPR013762">
    <property type="entry name" value="Integrase-like_cat_sf"/>
</dbReference>
<dbReference type="InterPro" id="IPR002104">
    <property type="entry name" value="Integrase_catalytic"/>
</dbReference>
<dbReference type="InterPro" id="IPR010998">
    <property type="entry name" value="Integrase_recombinase_N"/>
</dbReference>
<dbReference type="InterPro" id="IPR004107">
    <property type="entry name" value="Integrase_SAM-like_N"/>
</dbReference>
<dbReference type="InterPro" id="IPR023670">
    <property type="entry name" value="Recomb_XerS"/>
</dbReference>
<dbReference type="InterPro" id="IPR050090">
    <property type="entry name" value="Tyrosine_recombinase_XerCD"/>
</dbReference>
<dbReference type="NCBIfam" id="NF003462">
    <property type="entry name" value="PRK05084.1"/>
    <property type="match status" value="1"/>
</dbReference>
<dbReference type="PANTHER" id="PTHR30349">
    <property type="entry name" value="PHAGE INTEGRASE-RELATED"/>
    <property type="match status" value="1"/>
</dbReference>
<dbReference type="PANTHER" id="PTHR30349:SF77">
    <property type="entry name" value="TYROSINE RECOMBINASE XERC"/>
    <property type="match status" value="1"/>
</dbReference>
<dbReference type="Pfam" id="PF02899">
    <property type="entry name" value="Phage_int_SAM_1"/>
    <property type="match status" value="1"/>
</dbReference>
<dbReference type="Pfam" id="PF00589">
    <property type="entry name" value="Phage_integrase"/>
    <property type="match status" value="1"/>
</dbReference>
<dbReference type="SUPFAM" id="SSF56349">
    <property type="entry name" value="DNA breaking-rejoining enzymes"/>
    <property type="match status" value="1"/>
</dbReference>
<dbReference type="PROSITE" id="PS51900">
    <property type="entry name" value="CB"/>
    <property type="match status" value="1"/>
</dbReference>
<dbReference type="PROSITE" id="PS51898">
    <property type="entry name" value="TYR_RECOMBINASE"/>
    <property type="match status" value="1"/>
</dbReference>
<proteinExistence type="inferred from homology"/>
<feature type="chain" id="PRO_0000095368" description="Tyrosine recombinase XerS">
    <location>
        <begin position="1"/>
        <end position="356"/>
    </location>
</feature>
<feature type="domain" description="Core-binding (CB)" evidence="3">
    <location>
        <begin position="16"/>
        <end position="121"/>
    </location>
</feature>
<feature type="domain" description="Tyr recombinase" evidence="2">
    <location>
        <begin position="169"/>
        <end position="354"/>
    </location>
</feature>
<feature type="active site" evidence="1">
    <location>
        <position position="210"/>
    </location>
</feature>
<feature type="active site" evidence="1">
    <location>
        <position position="234"/>
    </location>
</feature>
<feature type="active site" evidence="1">
    <location>
        <position position="306"/>
    </location>
</feature>
<feature type="active site" evidence="1">
    <location>
        <position position="309"/>
    </location>
</feature>
<feature type="active site" evidence="1">
    <location>
        <position position="332"/>
    </location>
</feature>
<feature type="active site" description="O-(3'-phospho-DNA)-tyrosine intermediate" evidence="1">
    <location>
        <position position="341"/>
    </location>
</feature>
<gene>
    <name evidence="1" type="primary">xerS</name>
    <name type="ordered locus">spyM18_1147</name>
</gene>
<protein>
    <recommendedName>
        <fullName evidence="1">Tyrosine recombinase XerS</fullName>
    </recommendedName>
</protein>
<comment type="function">
    <text evidence="1">Site-specific tyrosine recombinase, which acts by catalyzing the cutting and rejoining of the recombining DNA molecules. Essential to convert dimers of the bacterial chromosome into monomers to permit their segregation at cell division.</text>
</comment>
<comment type="activity regulation">
    <text evidence="1">FtsK is required for recombination.</text>
</comment>
<comment type="subcellular location">
    <subcellularLocation>
        <location evidence="1">Cytoplasm</location>
    </subcellularLocation>
</comment>
<comment type="similarity">
    <text evidence="1">Belongs to the 'phage' integrase family. XerS subfamily.</text>
</comment>
<sequence>MRRELLLEKIETYKAIMPWYVLDYYQSKLAIPYSFTTLYEYLKEYKRFFDWLMDADLTQAPKIADIDLSTLEHLTKKDLEAFVLYLRERPSLNTYSTKEGLSQTTINRTLSALSSLYKYLTEEVENDQGEPYFYRNVMKKVSTKKKKETLASRAENIKQKLFLGDETLAFLDYVDKEYEQKLSNRAKSSFRKNKERDLAIIALLLASGVRLSEAVNLDLKDVNLNMMIIEVIRKGGKRDSVNVAGFAKGYLESYLAVRQRRYKAEKQDLAFFLTEYRGVPNRMDASSIEKMVGKYSEDFKIRVTPHKLRHTLATRLYDATKSQVLVSHQLGHSSTQVTDLYTHIVNDEQKNALDNL</sequence>
<keyword id="KW-0131">Cell cycle</keyword>
<keyword id="KW-0132">Cell division</keyword>
<keyword id="KW-0159">Chromosome partition</keyword>
<keyword id="KW-0963">Cytoplasm</keyword>
<keyword id="KW-0229">DNA integration</keyword>
<keyword id="KW-0233">DNA recombination</keyword>
<keyword id="KW-0238">DNA-binding</keyword>